<name>MUTL_VIBCH</name>
<reference key="1">
    <citation type="journal article" date="2000" name="Nature">
        <title>DNA sequence of both chromosomes of the cholera pathogen Vibrio cholerae.</title>
        <authorList>
            <person name="Heidelberg J.F."/>
            <person name="Eisen J.A."/>
            <person name="Nelson W.C."/>
            <person name="Clayton R.A."/>
            <person name="Gwinn M.L."/>
            <person name="Dodson R.J."/>
            <person name="Haft D.H."/>
            <person name="Hickey E.K."/>
            <person name="Peterson J.D."/>
            <person name="Umayam L.A."/>
            <person name="Gill S.R."/>
            <person name="Nelson K.E."/>
            <person name="Read T.D."/>
            <person name="Tettelin H."/>
            <person name="Richardson D.L."/>
            <person name="Ermolaeva M.D."/>
            <person name="Vamathevan J.J."/>
            <person name="Bass S."/>
            <person name="Qin H."/>
            <person name="Dragoi I."/>
            <person name="Sellers P."/>
            <person name="McDonald L.A."/>
            <person name="Utterback T.R."/>
            <person name="Fleischmann R.D."/>
            <person name="Nierman W.C."/>
            <person name="White O."/>
            <person name="Salzberg S.L."/>
            <person name="Smith H.O."/>
            <person name="Colwell R.R."/>
            <person name="Mekalanos J.J."/>
            <person name="Venter J.C."/>
            <person name="Fraser C.M."/>
        </authorList>
    </citation>
    <scope>NUCLEOTIDE SEQUENCE [LARGE SCALE GENOMIC DNA]</scope>
    <source>
        <strain>ATCC 39315 / El Tor Inaba N16961</strain>
    </source>
</reference>
<feature type="chain" id="PRO_0000177989" description="DNA mismatch repair protein MutL">
    <location>
        <begin position="1"/>
        <end position="653"/>
    </location>
</feature>
<feature type="region of interest" description="Disordered" evidence="2">
    <location>
        <begin position="375"/>
        <end position="425"/>
    </location>
</feature>
<feature type="compositionally biased region" description="Basic and acidic residues" evidence="2">
    <location>
        <begin position="380"/>
        <end position="389"/>
    </location>
</feature>
<keyword id="KW-0227">DNA damage</keyword>
<keyword id="KW-0234">DNA repair</keyword>
<keyword id="KW-1185">Reference proteome</keyword>
<gene>
    <name type="primary">mutL</name>
    <name type="ordered locus">VC_0345</name>
</gene>
<comment type="function">
    <text evidence="1">This protein is involved in the repair of mismatches in DNA. It is required for dam-dependent methyl-directed DNA mismatch repair. May act as a 'molecular matchmaker', a protein that promotes the formation of a stable complex between two or more DNA-binding proteins in an ATP-dependent manner without itself being part of a final effector complex (By similarity).</text>
</comment>
<comment type="similarity">
    <text evidence="3">Belongs to the DNA mismatch repair MutL/HexB family.</text>
</comment>
<protein>
    <recommendedName>
        <fullName>DNA mismatch repair protein MutL</fullName>
    </recommendedName>
</protein>
<organism>
    <name type="scientific">Vibrio cholerae serotype O1 (strain ATCC 39315 / El Tor Inaba N16961)</name>
    <dbReference type="NCBI Taxonomy" id="243277"/>
    <lineage>
        <taxon>Bacteria</taxon>
        <taxon>Pseudomonadati</taxon>
        <taxon>Pseudomonadota</taxon>
        <taxon>Gammaproteobacteria</taxon>
        <taxon>Vibrionales</taxon>
        <taxon>Vibrionaceae</taxon>
        <taxon>Vibrio</taxon>
    </lineage>
</organism>
<evidence type="ECO:0000250" key="1"/>
<evidence type="ECO:0000256" key="2">
    <source>
        <dbReference type="SAM" id="MobiDB-lite"/>
    </source>
</evidence>
<evidence type="ECO:0000305" key="3"/>
<proteinExistence type="inferred from homology"/>
<sequence>MTIRILPARLANQIAAGEVVERPASVVKELVENSLDAGATRIDIDLEKGGAKLIRIRDNGSGIDKDELGLALSRHATSKIHTLDDLEAIMSLGFRGEALASISSVSRLTLTSRTVAQEEAWSAYSEGRDMAVKLQPAAHPVGTTVEVLDLFFNTPARRKFLRTEKTEFTHIDELLKRIALSRFDVSFTLRHNGKIVRQYRAATTLPQQEKRLAAVCGNPFVQHMLRIELEHQGLKLHGWITTPEGARQQSDLQYCYVNGRMMRDKLINHAIRQSYETSLRVDQFATYVLFIELDPHQVDVNVHPAKHEVRFHQARLVHDFIYQALSSALVQGAQVMAPTINEGAFHLPHCAEEVNPPVVPMIDTTQQERVWQAVQNTPDYPRKAPRDNDRDESDNPQVRERAVSNPWVASPKTASTGKERYGSASVSKKEAAVYQTLMQTPDLSDEEPSTASTIVSSIEAVKANIAIEKLGKAIQVVAGQYLLMSSPQGCVLISLYQAQQLKLRGLLNAQHGALKAQPLLVPLALKLNESEWQVAQRHSSALLQLGIELKSRTNHSIMVMAVPQPLRQQNLQQLLPDLLSYAASCSESQALSHQALADWLTQRIVVEKRDYTLAEAIGLIAELEQLWQGNLPLQDPHFITLVDFSASITALHS</sequence>
<dbReference type="EMBL" id="AE003852">
    <property type="protein sequence ID" value="AAF93518.1"/>
    <property type="molecule type" value="Genomic_DNA"/>
</dbReference>
<dbReference type="PIR" id="A82334">
    <property type="entry name" value="A82334"/>
</dbReference>
<dbReference type="RefSeq" id="NP_229999.1">
    <property type="nucleotide sequence ID" value="NC_002505.1"/>
</dbReference>
<dbReference type="RefSeq" id="WP_000155485.1">
    <property type="nucleotide sequence ID" value="NZ_LT906614.1"/>
</dbReference>
<dbReference type="SMR" id="Q9KV13"/>
<dbReference type="STRING" id="243277.VC_0345"/>
<dbReference type="DNASU" id="2615058"/>
<dbReference type="EnsemblBacteria" id="AAF93518">
    <property type="protein sequence ID" value="AAF93518"/>
    <property type="gene ID" value="VC_0345"/>
</dbReference>
<dbReference type="KEGG" id="vch:VC_0345"/>
<dbReference type="PATRIC" id="fig|243277.26.peg.322"/>
<dbReference type="eggNOG" id="COG0323">
    <property type="taxonomic scope" value="Bacteria"/>
</dbReference>
<dbReference type="HOGENOM" id="CLU_004131_5_1_6"/>
<dbReference type="Proteomes" id="UP000000584">
    <property type="component" value="Chromosome 1"/>
</dbReference>
<dbReference type="GO" id="GO:0032300">
    <property type="term" value="C:mismatch repair complex"/>
    <property type="evidence" value="ECO:0000318"/>
    <property type="project" value="GO_Central"/>
</dbReference>
<dbReference type="GO" id="GO:0005524">
    <property type="term" value="F:ATP binding"/>
    <property type="evidence" value="ECO:0007669"/>
    <property type="project" value="InterPro"/>
</dbReference>
<dbReference type="GO" id="GO:0016887">
    <property type="term" value="F:ATP hydrolysis activity"/>
    <property type="evidence" value="ECO:0000318"/>
    <property type="project" value="GO_Central"/>
</dbReference>
<dbReference type="GO" id="GO:0140664">
    <property type="term" value="F:ATP-dependent DNA damage sensor activity"/>
    <property type="evidence" value="ECO:0007669"/>
    <property type="project" value="InterPro"/>
</dbReference>
<dbReference type="GO" id="GO:0030983">
    <property type="term" value="F:mismatched DNA binding"/>
    <property type="evidence" value="ECO:0007669"/>
    <property type="project" value="InterPro"/>
</dbReference>
<dbReference type="GO" id="GO:0006298">
    <property type="term" value="P:mismatch repair"/>
    <property type="evidence" value="ECO:0000318"/>
    <property type="project" value="GO_Central"/>
</dbReference>
<dbReference type="CDD" id="cd16926">
    <property type="entry name" value="HATPase_MutL-MLH-PMS-like"/>
    <property type="match status" value="1"/>
</dbReference>
<dbReference type="CDD" id="cd03482">
    <property type="entry name" value="MutL_Trans_MutL"/>
    <property type="match status" value="1"/>
</dbReference>
<dbReference type="FunFam" id="3.30.230.10:FF:000013">
    <property type="entry name" value="DNA mismatch repair endonuclease MutL"/>
    <property type="match status" value="1"/>
</dbReference>
<dbReference type="FunFam" id="3.30.565.10:FF:000003">
    <property type="entry name" value="DNA mismatch repair endonuclease MutL"/>
    <property type="match status" value="1"/>
</dbReference>
<dbReference type="Gene3D" id="3.30.230.10">
    <property type="match status" value="1"/>
</dbReference>
<dbReference type="Gene3D" id="3.30.565.10">
    <property type="entry name" value="Histidine kinase-like ATPase, C-terminal domain"/>
    <property type="match status" value="1"/>
</dbReference>
<dbReference type="Gene3D" id="3.30.1540.20">
    <property type="entry name" value="MutL, C-terminal domain, dimerisation subdomain"/>
    <property type="match status" value="1"/>
</dbReference>
<dbReference type="Gene3D" id="3.30.1370.100">
    <property type="entry name" value="MutL, C-terminal domain, regulatory subdomain"/>
    <property type="match status" value="1"/>
</dbReference>
<dbReference type="HAMAP" id="MF_00149">
    <property type="entry name" value="DNA_mis_repair"/>
    <property type="match status" value="1"/>
</dbReference>
<dbReference type="InterPro" id="IPR014762">
    <property type="entry name" value="DNA_mismatch_repair_CS"/>
</dbReference>
<dbReference type="InterPro" id="IPR020667">
    <property type="entry name" value="DNA_mismatch_repair_MutL"/>
</dbReference>
<dbReference type="InterPro" id="IPR013507">
    <property type="entry name" value="DNA_mismatch_S5_2-like"/>
</dbReference>
<dbReference type="InterPro" id="IPR036890">
    <property type="entry name" value="HATPase_C_sf"/>
</dbReference>
<dbReference type="InterPro" id="IPR002099">
    <property type="entry name" value="MutL/Mlh/PMS"/>
</dbReference>
<dbReference type="InterPro" id="IPR038973">
    <property type="entry name" value="MutL/Mlh/Pms-like"/>
</dbReference>
<dbReference type="InterPro" id="IPR014790">
    <property type="entry name" value="MutL_C"/>
</dbReference>
<dbReference type="InterPro" id="IPR042120">
    <property type="entry name" value="MutL_C_dimsub"/>
</dbReference>
<dbReference type="InterPro" id="IPR042121">
    <property type="entry name" value="MutL_C_regsub"/>
</dbReference>
<dbReference type="InterPro" id="IPR037198">
    <property type="entry name" value="MutL_C_sf"/>
</dbReference>
<dbReference type="InterPro" id="IPR020568">
    <property type="entry name" value="Ribosomal_Su5_D2-typ_SF"/>
</dbReference>
<dbReference type="InterPro" id="IPR014721">
    <property type="entry name" value="Ribsml_uS5_D2-typ_fold_subgr"/>
</dbReference>
<dbReference type="NCBIfam" id="TIGR00585">
    <property type="entry name" value="mutl"/>
    <property type="match status" value="1"/>
</dbReference>
<dbReference type="NCBIfam" id="NF000948">
    <property type="entry name" value="PRK00095.1-1"/>
    <property type="match status" value="1"/>
</dbReference>
<dbReference type="PANTHER" id="PTHR10073">
    <property type="entry name" value="DNA MISMATCH REPAIR PROTEIN MLH, PMS, MUTL"/>
    <property type="match status" value="1"/>
</dbReference>
<dbReference type="PANTHER" id="PTHR10073:SF12">
    <property type="entry name" value="DNA MISMATCH REPAIR PROTEIN MLH1"/>
    <property type="match status" value="1"/>
</dbReference>
<dbReference type="Pfam" id="PF01119">
    <property type="entry name" value="DNA_mis_repair"/>
    <property type="match status" value="1"/>
</dbReference>
<dbReference type="Pfam" id="PF13589">
    <property type="entry name" value="HATPase_c_3"/>
    <property type="match status" value="1"/>
</dbReference>
<dbReference type="Pfam" id="PF08676">
    <property type="entry name" value="MutL_C"/>
    <property type="match status" value="1"/>
</dbReference>
<dbReference type="SMART" id="SM01340">
    <property type="entry name" value="DNA_mis_repair"/>
    <property type="match status" value="1"/>
</dbReference>
<dbReference type="SMART" id="SM00853">
    <property type="entry name" value="MutL_C"/>
    <property type="match status" value="1"/>
</dbReference>
<dbReference type="SUPFAM" id="SSF55874">
    <property type="entry name" value="ATPase domain of HSP90 chaperone/DNA topoisomerase II/histidine kinase"/>
    <property type="match status" value="1"/>
</dbReference>
<dbReference type="SUPFAM" id="SSF118116">
    <property type="entry name" value="DNA mismatch repair protein MutL"/>
    <property type="match status" value="1"/>
</dbReference>
<dbReference type="SUPFAM" id="SSF54211">
    <property type="entry name" value="Ribosomal protein S5 domain 2-like"/>
    <property type="match status" value="1"/>
</dbReference>
<dbReference type="PROSITE" id="PS00058">
    <property type="entry name" value="DNA_MISMATCH_REPAIR_1"/>
    <property type="match status" value="1"/>
</dbReference>
<accession>Q9KV13</accession>